<proteinExistence type="evidence at transcript level"/>
<comment type="cofactor">
    <cofactor evidence="1">
        <name>Ca(2+)</name>
        <dbReference type="ChEBI" id="CHEBI:29108"/>
    </cofactor>
</comment>
<comment type="developmental stage">
    <text evidence="2">Expressed at relatively high levels in vegetative cells. Up-regulated at the 2 hour time point. The expression goes down until the 8th hour of development and then goes up at 14 to 16 hours.</text>
</comment>
<comment type="similarity">
    <text evidence="3">Belongs to the copine family.</text>
</comment>
<dbReference type="EMBL" id="AAFI02000071">
    <property type="protein sequence ID" value="EAL65048.1"/>
    <property type="molecule type" value="Genomic_DNA"/>
</dbReference>
<dbReference type="RefSeq" id="XP_638407.1">
    <property type="nucleotide sequence ID" value="XM_633315.1"/>
</dbReference>
<dbReference type="SMR" id="Q54P51"/>
<dbReference type="FunCoup" id="Q54P51">
    <property type="interactions" value="18"/>
</dbReference>
<dbReference type="STRING" id="44689.Q54P51"/>
<dbReference type="PaxDb" id="44689-DDB0216239"/>
<dbReference type="EnsemblProtists" id="EAL65048">
    <property type="protein sequence ID" value="EAL65048"/>
    <property type="gene ID" value="DDB_G0284791"/>
</dbReference>
<dbReference type="GeneID" id="8624777"/>
<dbReference type="KEGG" id="ddi:DDB_G0284791"/>
<dbReference type="dictyBase" id="DDB_G0284791">
    <property type="gene designation" value="cpnC"/>
</dbReference>
<dbReference type="VEuPathDB" id="AmoebaDB:DDB_G0284791"/>
<dbReference type="eggNOG" id="KOG1327">
    <property type="taxonomic scope" value="Eukaryota"/>
</dbReference>
<dbReference type="HOGENOM" id="CLU_020452_3_2_1"/>
<dbReference type="InParanoid" id="Q54P51"/>
<dbReference type="OMA" id="XVIAEEL"/>
<dbReference type="PhylomeDB" id="Q54P51"/>
<dbReference type="Reactome" id="R-DDI-1483206">
    <property type="pathway name" value="Glycerophospholipid biosynthesis"/>
</dbReference>
<dbReference type="Reactome" id="R-DDI-6798695">
    <property type="pathway name" value="Neutrophil degranulation"/>
</dbReference>
<dbReference type="Reactome" id="R-DDI-9013406">
    <property type="pathway name" value="RHOQ GTPase cycle"/>
</dbReference>
<dbReference type="PRO" id="PR:Q54P51"/>
<dbReference type="Proteomes" id="UP000002195">
    <property type="component" value="Chromosome 4"/>
</dbReference>
<dbReference type="GO" id="GO:0005829">
    <property type="term" value="C:cytosol"/>
    <property type="evidence" value="ECO:0000314"/>
    <property type="project" value="dictyBase"/>
</dbReference>
<dbReference type="GO" id="GO:0005634">
    <property type="term" value="C:nucleus"/>
    <property type="evidence" value="ECO:0000314"/>
    <property type="project" value="dictyBase"/>
</dbReference>
<dbReference type="GO" id="GO:0005886">
    <property type="term" value="C:plasma membrane"/>
    <property type="evidence" value="ECO:0000314"/>
    <property type="project" value="dictyBase"/>
</dbReference>
<dbReference type="GO" id="GO:0005544">
    <property type="term" value="F:calcium-dependent phospholipid binding"/>
    <property type="evidence" value="ECO:0000318"/>
    <property type="project" value="GO_Central"/>
</dbReference>
<dbReference type="GO" id="GO:0046872">
    <property type="term" value="F:metal ion binding"/>
    <property type="evidence" value="ECO:0007669"/>
    <property type="project" value="UniProtKB-KW"/>
</dbReference>
<dbReference type="GO" id="GO:0070273">
    <property type="term" value="F:phosphatidylinositol-4-phosphate binding"/>
    <property type="evidence" value="ECO:0000314"/>
    <property type="project" value="dictyBase"/>
</dbReference>
<dbReference type="GO" id="GO:0098609">
    <property type="term" value="P:cell-cell adhesion"/>
    <property type="evidence" value="ECO:0000315"/>
    <property type="project" value="dictyBase"/>
</dbReference>
<dbReference type="GO" id="GO:0031589">
    <property type="term" value="P:cell-substrate adhesion"/>
    <property type="evidence" value="ECO:0000315"/>
    <property type="project" value="dictyBase"/>
</dbReference>
<dbReference type="GO" id="GO:0071277">
    <property type="term" value="P:cellular response to calcium ion"/>
    <property type="evidence" value="ECO:0000314"/>
    <property type="project" value="dictyBase"/>
</dbReference>
<dbReference type="GO" id="GO:0010629">
    <property type="term" value="P:negative regulation of gene expression"/>
    <property type="evidence" value="ECO:0000315"/>
    <property type="project" value="dictyBase"/>
</dbReference>
<dbReference type="GO" id="GO:0010628">
    <property type="term" value="P:positive regulation of gene expression"/>
    <property type="evidence" value="ECO:0000315"/>
    <property type="project" value="dictyBase"/>
</dbReference>
<dbReference type="GO" id="GO:0030587">
    <property type="term" value="P:sorocarp development"/>
    <property type="evidence" value="ECO:0000315"/>
    <property type="project" value="dictyBase"/>
</dbReference>
<dbReference type="CDD" id="cd04048">
    <property type="entry name" value="C2A_Copine"/>
    <property type="match status" value="1"/>
</dbReference>
<dbReference type="CDD" id="cd04047">
    <property type="entry name" value="C2B_Copine"/>
    <property type="match status" value="1"/>
</dbReference>
<dbReference type="FunFam" id="2.60.40.150:FF:000219">
    <property type="entry name" value="Copine-E"/>
    <property type="match status" value="1"/>
</dbReference>
<dbReference type="FunFam" id="2.60.40.150:FF:000307">
    <property type="entry name" value="Copine-E"/>
    <property type="match status" value="1"/>
</dbReference>
<dbReference type="Gene3D" id="2.60.40.150">
    <property type="entry name" value="C2 domain"/>
    <property type="match status" value="2"/>
</dbReference>
<dbReference type="InterPro" id="IPR000008">
    <property type="entry name" value="C2_dom"/>
</dbReference>
<dbReference type="InterPro" id="IPR035892">
    <property type="entry name" value="C2_domain_sf"/>
</dbReference>
<dbReference type="InterPro" id="IPR037768">
    <property type="entry name" value="C2B_Copine"/>
</dbReference>
<dbReference type="InterPro" id="IPR045052">
    <property type="entry name" value="Copine"/>
</dbReference>
<dbReference type="InterPro" id="IPR010734">
    <property type="entry name" value="Copine_C"/>
</dbReference>
<dbReference type="InterPro" id="IPR002035">
    <property type="entry name" value="VWF_A"/>
</dbReference>
<dbReference type="InterPro" id="IPR036465">
    <property type="entry name" value="vWFA_dom_sf"/>
</dbReference>
<dbReference type="PANTHER" id="PTHR10857">
    <property type="entry name" value="COPINE"/>
    <property type="match status" value="1"/>
</dbReference>
<dbReference type="PANTHER" id="PTHR10857:SF58">
    <property type="entry name" value="COPINE-C"/>
    <property type="match status" value="1"/>
</dbReference>
<dbReference type="Pfam" id="PF00168">
    <property type="entry name" value="C2"/>
    <property type="match status" value="2"/>
</dbReference>
<dbReference type="Pfam" id="PF07002">
    <property type="entry name" value="Copine"/>
    <property type="match status" value="1"/>
</dbReference>
<dbReference type="SMART" id="SM00239">
    <property type="entry name" value="C2"/>
    <property type="match status" value="2"/>
</dbReference>
<dbReference type="SMART" id="SM00327">
    <property type="entry name" value="VWA"/>
    <property type="match status" value="1"/>
</dbReference>
<dbReference type="SUPFAM" id="SSF49562">
    <property type="entry name" value="C2 domain (Calcium/lipid-binding domain, CaLB)"/>
    <property type="match status" value="2"/>
</dbReference>
<dbReference type="SUPFAM" id="SSF53300">
    <property type="entry name" value="vWA-like"/>
    <property type="match status" value="1"/>
</dbReference>
<dbReference type="PROSITE" id="PS50004">
    <property type="entry name" value="C2"/>
    <property type="match status" value="2"/>
</dbReference>
<feature type="chain" id="PRO_0000330656" description="Copine-C">
    <location>
        <begin position="1"/>
        <end position="539"/>
    </location>
</feature>
<feature type="domain" description="C2 1" evidence="1">
    <location>
        <begin position="1"/>
        <end position="120"/>
    </location>
</feature>
<feature type="domain" description="C2 2" evidence="1">
    <location>
        <begin position="128"/>
        <end position="251"/>
    </location>
</feature>
<feature type="domain" description="VWFA">
    <location>
        <begin position="290"/>
        <end position="507"/>
    </location>
</feature>
<feature type="binding site" evidence="1">
    <location>
        <position position="23"/>
    </location>
    <ligand>
        <name>Ca(2+)</name>
        <dbReference type="ChEBI" id="CHEBI:29108"/>
        <label>2</label>
    </ligand>
</feature>
<feature type="binding site" evidence="1">
    <location>
        <position position="24"/>
    </location>
    <ligand>
        <name>Ca(2+)</name>
        <dbReference type="ChEBI" id="CHEBI:29108"/>
        <label>1</label>
    </ligand>
</feature>
<feature type="binding site" evidence="1">
    <location>
        <position position="24"/>
    </location>
    <ligand>
        <name>Ca(2+)</name>
        <dbReference type="ChEBI" id="CHEBI:29108"/>
        <label>2</label>
    </ligand>
</feature>
<feature type="binding site" evidence="1">
    <location>
        <position position="30"/>
    </location>
    <ligand>
        <name>Ca(2+)</name>
        <dbReference type="ChEBI" id="CHEBI:29108"/>
        <label>1</label>
    </ligand>
</feature>
<feature type="binding site" evidence="1">
    <location>
        <position position="83"/>
    </location>
    <ligand>
        <name>Ca(2+)</name>
        <dbReference type="ChEBI" id="CHEBI:29108"/>
        <label>1</label>
    </ligand>
</feature>
<feature type="binding site" evidence="1">
    <location>
        <position position="83"/>
    </location>
    <ligand>
        <name>Ca(2+)</name>
        <dbReference type="ChEBI" id="CHEBI:29108"/>
        <label>2</label>
    </ligand>
</feature>
<feature type="binding site" evidence="1">
    <location>
        <position position="85"/>
    </location>
    <ligand>
        <name>Ca(2+)</name>
        <dbReference type="ChEBI" id="CHEBI:29108"/>
        <label>1</label>
    </ligand>
</feature>
<feature type="binding site" evidence="1">
    <location>
        <position position="85"/>
    </location>
    <ligand>
        <name>Ca(2+)</name>
        <dbReference type="ChEBI" id="CHEBI:29108"/>
        <label>2</label>
    </ligand>
</feature>
<feature type="binding site" evidence="1">
    <location>
        <position position="98"/>
    </location>
    <ligand>
        <name>Ca(2+)</name>
        <dbReference type="ChEBI" id="CHEBI:29108"/>
        <label>2</label>
    </ligand>
</feature>
<protein>
    <recommendedName>
        <fullName>Copine-C</fullName>
    </recommendedName>
</protein>
<evidence type="ECO:0000255" key="1">
    <source>
        <dbReference type="PROSITE-ProRule" id="PRU00041"/>
    </source>
</evidence>
<evidence type="ECO:0000269" key="2">
    <source>
    </source>
</evidence>
<evidence type="ECO:0000305" key="3"/>
<name>CPNC_DICDI</name>
<gene>
    <name type="primary">cpnC</name>
    <name type="ORF">DDB_G0284791</name>
</gene>
<organism>
    <name type="scientific">Dictyostelium discoideum</name>
    <name type="common">Social amoeba</name>
    <dbReference type="NCBI Taxonomy" id="44689"/>
    <lineage>
        <taxon>Eukaryota</taxon>
        <taxon>Amoebozoa</taxon>
        <taxon>Evosea</taxon>
        <taxon>Eumycetozoa</taxon>
        <taxon>Dictyostelia</taxon>
        <taxon>Dictyosteliales</taxon>
        <taxon>Dictyosteliaceae</taxon>
        <taxon>Dictyostelium</taxon>
    </lineage>
</organism>
<accession>Q54P51</accession>
<reference key="1">
    <citation type="journal article" date="2005" name="Nature">
        <title>The genome of the social amoeba Dictyostelium discoideum.</title>
        <authorList>
            <person name="Eichinger L."/>
            <person name="Pachebat J.A."/>
            <person name="Gloeckner G."/>
            <person name="Rajandream M.A."/>
            <person name="Sucgang R."/>
            <person name="Berriman M."/>
            <person name="Song J."/>
            <person name="Olsen R."/>
            <person name="Szafranski K."/>
            <person name="Xu Q."/>
            <person name="Tunggal B."/>
            <person name="Kummerfeld S."/>
            <person name="Madera M."/>
            <person name="Konfortov B.A."/>
            <person name="Rivero F."/>
            <person name="Bankier A.T."/>
            <person name="Lehmann R."/>
            <person name="Hamlin N."/>
            <person name="Davies R."/>
            <person name="Gaudet P."/>
            <person name="Fey P."/>
            <person name="Pilcher K."/>
            <person name="Chen G."/>
            <person name="Saunders D."/>
            <person name="Sodergren E.J."/>
            <person name="Davis P."/>
            <person name="Kerhornou A."/>
            <person name="Nie X."/>
            <person name="Hall N."/>
            <person name="Anjard C."/>
            <person name="Hemphill L."/>
            <person name="Bason N."/>
            <person name="Farbrother P."/>
            <person name="Desany B."/>
            <person name="Just E."/>
            <person name="Morio T."/>
            <person name="Rost R."/>
            <person name="Churcher C.M."/>
            <person name="Cooper J."/>
            <person name="Haydock S."/>
            <person name="van Driessche N."/>
            <person name="Cronin A."/>
            <person name="Goodhead I."/>
            <person name="Muzny D.M."/>
            <person name="Mourier T."/>
            <person name="Pain A."/>
            <person name="Lu M."/>
            <person name="Harper D."/>
            <person name="Lindsay R."/>
            <person name="Hauser H."/>
            <person name="James K.D."/>
            <person name="Quiles M."/>
            <person name="Madan Babu M."/>
            <person name="Saito T."/>
            <person name="Buchrieser C."/>
            <person name="Wardroper A."/>
            <person name="Felder M."/>
            <person name="Thangavelu M."/>
            <person name="Johnson D."/>
            <person name="Knights A."/>
            <person name="Loulseged H."/>
            <person name="Mungall K.L."/>
            <person name="Oliver K."/>
            <person name="Price C."/>
            <person name="Quail M.A."/>
            <person name="Urushihara H."/>
            <person name="Hernandez J."/>
            <person name="Rabbinowitsch E."/>
            <person name="Steffen D."/>
            <person name="Sanders M."/>
            <person name="Ma J."/>
            <person name="Kohara Y."/>
            <person name="Sharp S."/>
            <person name="Simmonds M.N."/>
            <person name="Spiegler S."/>
            <person name="Tivey A."/>
            <person name="Sugano S."/>
            <person name="White B."/>
            <person name="Walker D."/>
            <person name="Woodward J.R."/>
            <person name="Winckler T."/>
            <person name="Tanaka Y."/>
            <person name="Shaulsky G."/>
            <person name="Schleicher M."/>
            <person name="Weinstock G.M."/>
            <person name="Rosenthal A."/>
            <person name="Cox E.C."/>
            <person name="Chisholm R.L."/>
            <person name="Gibbs R.A."/>
            <person name="Loomis W.F."/>
            <person name="Platzer M."/>
            <person name="Kay R.R."/>
            <person name="Williams J.G."/>
            <person name="Dear P.H."/>
            <person name="Noegel A.A."/>
            <person name="Barrell B.G."/>
            <person name="Kuspa A."/>
        </authorList>
    </citation>
    <scope>NUCLEOTIDE SEQUENCE [LARGE SCALE GENOMIC DNA]</scope>
    <source>
        <strain>AX4</strain>
    </source>
</reference>
<reference key="2">
    <citation type="journal article" date="2007" name="Eukaryot. Cell">
        <title>Copine A is required for cytokinesis, contractile vacuole function, and development in Dictyostelium.</title>
        <authorList>
            <person name="Damer C.K."/>
            <person name="Bayeva M."/>
            <person name="Kim P.S."/>
            <person name="Ho L.K."/>
            <person name="Eberhardt E.S."/>
            <person name="Socec C.I."/>
            <person name="Lee J.S."/>
            <person name="Bruce E.A."/>
            <person name="Goldman-Yassen A.E."/>
            <person name="Naliboff L.C."/>
        </authorList>
    </citation>
    <scope>DEVELOPMENTAL STAGE</scope>
</reference>
<sequence length="539" mass="59893">MIPSSKPNSRVELRFRCHHLKNLDIVSKSDPQIFISEKRGPGGFQFVDCTEKIKNNLSPEFKKTITLDYYFEEIQTLTFTVMDIDKEITLFGDLDKNDKIGEFTTSLSNILSRPGRKIVADLIHHSKVTGKIEISAEEICQTNHHIFLSAEGIGLDKKDLFSSDPYYKIYKTNPNGEQLLVFQSIVIKSNVNPLWPELHMELEKFNGGDMFRELLIEVYDYDSIGAHDLIGITRTTTDAILRGVIEYPLINPKKTSKSGYKNSGILKFYKVRLEKTHTFLEFLAGGCEISLMTAIDCTGSNGSVNSFSGLHYNDLEKGGSAYARSIASVGSVLSSYDSDGFIDVFGFGGEYQGRTSHCFPFSLDPNVPSAFGVAGVLEMYNRNISKIPFSGPTNFASVIQEAIARASESRLPYQQKYTVLLIITDGEICDMDETIKCLVQASNLPLSVVIVGVGLSSFENMNLLDGDNGCLVDYKGNRAKRDIVQFVPFNKYSGNINALAQETLKEIPGQLLSYFKSIGVPPNPPRTFIPVDILPPPPQ</sequence>
<keyword id="KW-0106">Calcium</keyword>
<keyword id="KW-0479">Metal-binding</keyword>
<keyword id="KW-1185">Reference proteome</keyword>
<keyword id="KW-0677">Repeat</keyword>